<dbReference type="EMBL" id="CP000606">
    <property type="protein sequence ID" value="ABO24501.1"/>
    <property type="molecule type" value="Genomic_DNA"/>
</dbReference>
<dbReference type="RefSeq" id="WP_011866432.1">
    <property type="nucleotide sequence ID" value="NC_009092.1"/>
</dbReference>
<dbReference type="SMR" id="A3QGA3"/>
<dbReference type="STRING" id="323850.Shew_2635"/>
<dbReference type="KEGG" id="slo:Shew_2635"/>
<dbReference type="eggNOG" id="COG0052">
    <property type="taxonomic scope" value="Bacteria"/>
</dbReference>
<dbReference type="HOGENOM" id="CLU_040318_1_2_6"/>
<dbReference type="OrthoDB" id="9808036at2"/>
<dbReference type="Proteomes" id="UP000001558">
    <property type="component" value="Chromosome"/>
</dbReference>
<dbReference type="GO" id="GO:0022627">
    <property type="term" value="C:cytosolic small ribosomal subunit"/>
    <property type="evidence" value="ECO:0007669"/>
    <property type="project" value="TreeGrafter"/>
</dbReference>
<dbReference type="GO" id="GO:0003735">
    <property type="term" value="F:structural constituent of ribosome"/>
    <property type="evidence" value="ECO:0007669"/>
    <property type="project" value="InterPro"/>
</dbReference>
<dbReference type="GO" id="GO:0006412">
    <property type="term" value="P:translation"/>
    <property type="evidence" value="ECO:0007669"/>
    <property type="project" value="UniProtKB-UniRule"/>
</dbReference>
<dbReference type="CDD" id="cd01425">
    <property type="entry name" value="RPS2"/>
    <property type="match status" value="1"/>
</dbReference>
<dbReference type="FunFam" id="1.10.287.610:FF:000001">
    <property type="entry name" value="30S ribosomal protein S2"/>
    <property type="match status" value="1"/>
</dbReference>
<dbReference type="Gene3D" id="3.40.50.10490">
    <property type="entry name" value="Glucose-6-phosphate isomerase like protein, domain 1"/>
    <property type="match status" value="1"/>
</dbReference>
<dbReference type="Gene3D" id="1.10.287.610">
    <property type="entry name" value="Helix hairpin bin"/>
    <property type="match status" value="1"/>
</dbReference>
<dbReference type="HAMAP" id="MF_00291_B">
    <property type="entry name" value="Ribosomal_uS2_B"/>
    <property type="match status" value="1"/>
</dbReference>
<dbReference type="InterPro" id="IPR001865">
    <property type="entry name" value="Ribosomal_uS2"/>
</dbReference>
<dbReference type="InterPro" id="IPR005706">
    <property type="entry name" value="Ribosomal_uS2_bac/mit/plastid"/>
</dbReference>
<dbReference type="InterPro" id="IPR018130">
    <property type="entry name" value="Ribosomal_uS2_CS"/>
</dbReference>
<dbReference type="InterPro" id="IPR023591">
    <property type="entry name" value="Ribosomal_uS2_flav_dom_sf"/>
</dbReference>
<dbReference type="NCBIfam" id="TIGR01011">
    <property type="entry name" value="rpsB_bact"/>
    <property type="match status" value="1"/>
</dbReference>
<dbReference type="PANTHER" id="PTHR12534">
    <property type="entry name" value="30S RIBOSOMAL PROTEIN S2 PROKARYOTIC AND ORGANELLAR"/>
    <property type="match status" value="1"/>
</dbReference>
<dbReference type="PANTHER" id="PTHR12534:SF0">
    <property type="entry name" value="SMALL RIBOSOMAL SUBUNIT PROTEIN US2M"/>
    <property type="match status" value="1"/>
</dbReference>
<dbReference type="Pfam" id="PF00318">
    <property type="entry name" value="Ribosomal_S2"/>
    <property type="match status" value="1"/>
</dbReference>
<dbReference type="PRINTS" id="PR00395">
    <property type="entry name" value="RIBOSOMALS2"/>
</dbReference>
<dbReference type="SUPFAM" id="SSF52313">
    <property type="entry name" value="Ribosomal protein S2"/>
    <property type="match status" value="1"/>
</dbReference>
<dbReference type="PROSITE" id="PS00962">
    <property type="entry name" value="RIBOSOMAL_S2_1"/>
    <property type="match status" value="1"/>
</dbReference>
<dbReference type="PROSITE" id="PS00963">
    <property type="entry name" value="RIBOSOMAL_S2_2"/>
    <property type="match status" value="1"/>
</dbReference>
<organism>
    <name type="scientific">Shewanella loihica (strain ATCC BAA-1088 / PV-4)</name>
    <dbReference type="NCBI Taxonomy" id="323850"/>
    <lineage>
        <taxon>Bacteria</taxon>
        <taxon>Pseudomonadati</taxon>
        <taxon>Pseudomonadota</taxon>
        <taxon>Gammaproteobacteria</taxon>
        <taxon>Alteromonadales</taxon>
        <taxon>Shewanellaceae</taxon>
        <taxon>Shewanella</taxon>
    </lineage>
</organism>
<name>RS2_SHELP</name>
<comment type="similarity">
    <text evidence="1">Belongs to the universal ribosomal protein uS2 family.</text>
</comment>
<evidence type="ECO:0000255" key="1">
    <source>
        <dbReference type="HAMAP-Rule" id="MF_00291"/>
    </source>
</evidence>
<evidence type="ECO:0000305" key="2"/>
<protein>
    <recommendedName>
        <fullName evidence="1">Small ribosomal subunit protein uS2</fullName>
    </recommendedName>
    <alternativeName>
        <fullName evidence="2">30S ribosomal protein S2</fullName>
    </alternativeName>
</protein>
<keyword id="KW-1185">Reference proteome</keyword>
<keyword id="KW-0687">Ribonucleoprotein</keyword>
<keyword id="KW-0689">Ribosomal protein</keyword>
<feature type="chain" id="PRO_1000004065" description="Small ribosomal subunit protein uS2">
    <location>
        <begin position="1"/>
        <end position="242"/>
    </location>
</feature>
<gene>
    <name evidence="1" type="primary">rpsB</name>
    <name type="ordered locus">Shew_2635</name>
</gene>
<accession>A3QGA3</accession>
<sequence length="242" mass="26605">MTTVSMRDMLQAGVHFGHQTRYWNPKMKPFIFGARNGVHIINLEHTVPMFNEALAFISNVASKKGKVLFVGTKRAASEAIKEAAISCDQYYVDNRWLGGMLTNWKTVRQSIKRLKDLESQSVDGTFDKLTKKEALMRTRELEKLEKSLGGIKNMGGLPDVIFVIGADHEHIAIKEANNLGIPVVAVVDTNSSPDGINYIVPGNDDAMRAIRLYAESVAAAAKAGRGQDLAVQAEQDGFVEAE</sequence>
<reference key="1">
    <citation type="submission" date="2007-03" db="EMBL/GenBank/DDBJ databases">
        <title>Complete sequence of Shewanella loihica PV-4.</title>
        <authorList>
            <consortium name="US DOE Joint Genome Institute"/>
            <person name="Copeland A."/>
            <person name="Lucas S."/>
            <person name="Lapidus A."/>
            <person name="Barry K."/>
            <person name="Detter J.C."/>
            <person name="Glavina del Rio T."/>
            <person name="Hammon N."/>
            <person name="Israni S."/>
            <person name="Dalin E."/>
            <person name="Tice H."/>
            <person name="Pitluck S."/>
            <person name="Chain P."/>
            <person name="Malfatti S."/>
            <person name="Shin M."/>
            <person name="Vergez L."/>
            <person name="Schmutz J."/>
            <person name="Larimer F."/>
            <person name="Land M."/>
            <person name="Hauser L."/>
            <person name="Kyrpides N."/>
            <person name="Mikhailova N."/>
            <person name="Romine M.F."/>
            <person name="Serres G."/>
            <person name="Fredrickson J."/>
            <person name="Tiedje J."/>
            <person name="Richardson P."/>
        </authorList>
    </citation>
    <scope>NUCLEOTIDE SEQUENCE [LARGE SCALE GENOMIC DNA]</scope>
    <source>
        <strain>ATCC BAA-1088 / PV-4</strain>
    </source>
</reference>
<proteinExistence type="inferred from homology"/>